<evidence type="ECO:0000255" key="1">
    <source>
        <dbReference type="HAMAP-Rule" id="MF_00228"/>
    </source>
</evidence>
<protein>
    <recommendedName>
        <fullName evidence="1">Hydroxyethylthiazole kinase</fullName>
        <ecNumber evidence="1">2.7.1.50</ecNumber>
    </recommendedName>
    <alternativeName>
        <fullName evidence="1">4-methyl-5-beta-hydroxyethylthiazole kinase</fullName>
        <shortName evidence="1">TH kinase</shortName>
        <shortName evidence="1">Thz kinase</shortName>
    </alternativeName>
</protein>
<dbReference type="EC" id="2.7.1.50" evidence="1"/>
<dbReference type="EMBL" id="CP000252">
    <property type="protein sequence ID" value="ABC78586.1"/>
    <property type="molecule type" value="Genomic_DNA"/>
</dbReference>
<dbReference type="RefSeq" id="WP_011418605.1">
    <property type="nucleotide sequence ID" value="NC_007759.1"/>
</dbReference>
<dbReference type="SMR" id="Q2LWX9"/>
<dbReference type="FunCoup" id="Q2LWX9">
    <property type="interactions" value="173"/>
</dbReference>
<dbReference type="STRING" id="56780.SYN_00303"/>
<dbReference type="KEGG" id="sat:SYN_00303"/>
<dbReference type="eggNOG" id="COG2145">
    <property type="taxonomic scope" value="Bacteria"/>
</dbReference>
<dbReference type="HOGENOM" id="CLU_019943_0_1_7"/>
<dbReference type="InParanoid" id="Q2LWX9"/>
<dbReference type="OrthoDB" id="8909021at2"/>
<dbReference type="UniPathway" id="UPA00060">
    <property type="reaction ID" value="UER00139"/>
</dbReference>
<dbReference type="Proteomes" id="UP000001933">
    <property type="component" value="Chromosome"/>
</dbReference>
<dbReference type="GO" id="GO:0005524">
    <property type="term" value="F:ATP binding"/>
    <property type="evidence" value="ECO:0007669"/>
    <property type="project" value="UniProtKB-UniRule"/>
</dbReference>
<dbReference type="GO" id="GO:0004417">
    <property type="term" value="F:hydroxyethylthiazole kinase activity"/>
    <property type="evidence" value="ECO:0007669"/>
    <property type="project" value="UniProtKB-UniRule"/>
</dbReference>
<dbReference type="GO" id="GO:0000287">
    <property type="term" value="F:magnesium ion binding"/>
    <property type="evidence" value="ECO:0007669"/>
    <property type="project" value="UniProtKB-UniRule"/>
</dbReference>
<dbReference type="GO" id="GO:0009228">
    <property type="term" value="P:thiamine biosynthetic process"/>
    <property type="evidence" value="ECO:0007669"/>
    <property type="project" value="UniProtKB-KW"/>
</dbReference>
<dbReference type="GO" id="GO:0009229">
    <property type="term" value="P:thiamine diphosphate biosynthetic process"/>
    <property type="evidence" value="ECO:0007669"/>
    <property type="project" value="UniProtKB-UniRule"/>
</dbReference>
<dbReference type="CDD" id="cd01170">
    <property type="entry name" value="THZ_kinase"/>
    <property type="match status" value="1"/>
</dbReference>
<dbReference type="Gene3D" id="3.40.1190.20">
    <property type="match status" value="1"/>
</dbReference>
<dbReference type="HAMAP" id="MF_00228">
    <property type="entry name" value="Thz_kinase"/>
    <property type="match status" value="1"/>
</dbReference>
<dbReference type="InterPro" id="IPR000417">
    <property type="entry name" value="Hyethyz_kinase"/>
</dbReference>
<dbReference type="InterPro" id="IPR029056">
    <property type="entry name" value="Ribokinase-like"/>
</dbReference>
<dbReference type="NCBIfam" id="NF006830">
    <property type="entry name" value="PRK09355.1"/>
    <property type="match status" value="1"/>
</dbReference>
<dbReference type="NCBIfam" id="TIGR00694">
    <property type="entry name" value="thiM"/>
    <property type="match status" value="1"/>
</dbReference>
<dbReference type="Pfam" id="PF02110">
    <property type="entry name" value="HK"/>
    <property type="match status" value="1"/>
</dbReference>
<dbReference type="PIRSF" id="PIRSF000513">
    <property type="entry name" value="Thz_kinase"/>
    <property type="match status" value="1"/>
</dbReference>
<dbReference type="PRINTS" id="PR01099">
    <property type="entry name" value="HYETHTZKNASE"/>
</dbReference>
<dbReference type="SUPFAM" id="SSF53613">
    <property type="entry name" value="Ribokinase-like"/>
    <property type="match status" value="1"/>
</dbReference>
<keyword id="KW-0067">ATP-binding</keyword>
<keyword id="KW-0418">Kinase</keyword>
<keyword id="KW-0460">Magnesium</keyword>
<keyword id="KW-0479">Metal-binding</keyword>
<keyword id="KW-0547">Nucleotide-binding</keyword>
<keyword id="KW-1185">Reference proteome</keyword>
<keyword id="KW-0784">Thiamine biosynthesis</keyword>
<keyword id="KW-0808">Transferase</keyword>
<comment type="function">
    <text evidence="1">Catalyzes the phosphorylation of the hydroxyl group of 4-methyl-5-beta-hydroxyethylthiazole (THZ).</text>
</comment>
<comment type="catalytic activity">
    <reaction evidence="1">
        <text>5-(2-hydroxyethyl)-4-methylthiazole + ATP = 4-methyl-5-(2-phosphooxyethyl)-thiazole + ADP + H(+)</text>
        <dbReference type="Rhea" id="RHEA:24212"/>
        <dbReference type="ChEBI" id="CHEBI:15378"/>
        <dbReference type="ChEBI" id="CHEBI:17957"/>
        <dbReference type="ChEBI" id="CHEBI:30616"/>
        <dbReference type="ChEBI" id="CHEBI:58296"/>
        <dbReference type="ChEBI" id="CHEBI:456216"/>
        <dbReference type="EC" id="2.7.1.50"/>
    </reaction>
</comment>
<comment type="cofactor">
    <cofactor evidence="1">
        <name>Mg(2+)</name>
        <dbReference type="ChEBI" id="CHEBI:18420"/>
    </cofactor>
</comment>
<comment type="pathway">
    <text evidence="1">Cofactor biosynthesis; thiamine diphosphate biosynthesis; 4-methyl-5-(2-phosphoethyl)-thiazole from 5-(2-hydroxyethyl)-4-methylthiazole: step 1/1.</text>
</comment>
<comment type="similarity">
    <text evidence="1">Belongs to the Thz kinase family.</text>
</comment>
<gene>
    <name evidence="1" type="primary">thiM</name>
    <name type="ordered locus">SYNAS_27070</name>
    <name type="ORF">SYN_00303</name>
</gene>
<organism>
    <name type="scientific">Syntrophus aciditrophicus (strain SB)</name>
    <dbReference type="NCBI Taxonomy" id="56780"/>
    <lineage>
        <taxon>Bacteria</taxon>
        <taxon>Pseudomonadati</taxon>
        <taxon>Thermodesulfobacteriota</taxon>
        <taxon>Syntrophia</taxon>
        <taxon>Syntrophales</taxon>
        <taxon>Syntrophaceae</taxon>
        <taxon>Syntrophus</taxon>
    </lineage>
</organism>
<accession>Q2LWX9</accession>
<feature type="chain" id="PRO_0000336574" description="Hydroxyethylthiazole kinase">
    <location>
        <begin position="1"/>
        <end position="270"/>
    </location>
</feature>
<feature type="binding site" evidence="1">
    <location>
        <position position="47"/>
    </location>
    <ligand>
        <name>substrate</name>
    </ligand>
</feature>
<feature type="binding site" evidence="1">
    <location>
        <position position="123"/>
    </location>
    <ligand>
        <name>ATP</name>
        <dbReference type="ChEBI" id="CHEBI:30616"/>
    </ligand>
</feature>
<feature type="binding site" evidence="1">
    <location>
        <position position="170"/>
    </location>
    <ligand>
        <name>ATP</name>
        <dbReference type="ChEBI" id="CHEBI:30616"/>
    </ligand>
</feature>
<feature type="binding site" evidence="1">
    <location>
        <position position="197"/>
    </location>
    <ligand>
        <name>substrate</name>
    </ligand>
</feature>
<name>THIM_SYNAS</name>
<reference key="1">
    <citation type="journal article" date="2007" name="Proc. Natl. Acad. Sci. U.S.A.">
        <title>The genome of Syntrophus aciditrophicus: life at the thermodynamic limit of microbial growth.</title>
        <authorList>
            <person name="McInerney M.J."/>
            <person name="Rohlin L."/>
            <person name="Mouttaki H."/>
            <person name="Kim U."/>
            <person name="Krupp R.S."/>
            <person name="Rios-Hernandez L."/>
            <person name="Sieber J."/>
            <person name="Struchtemeyer C.G."/>
            <person name="Bhattacharyya A."/>
            <person name="Campbell J.W."/>
            <person name="Gunsalus R.P."/>
        </authorList>
    </citation>
    <scope>NUCLEOTIDE SEQUENCE [LARGE SCALE GENOMIC DNA]</scope>
    <source>
        <strain>SB</strain>
    </source>
</reference>
<proteinExistence type="inferred from homology"/>
<sequence>MQITPENTWAAVKAIRSRAPLIHNITNYVVMNSTANALLALGASPVMAHAQEEVEEMVGIAQALVVNIGTLSPSWVRAMASAALKAADRGIPIILDPVGAGATAYRTRTAFQLLETVSPTIIRGNASEILAFESVETMETRGVDSTELSQNAVDAGRRLNDSYGSTVCISGETDFIIGDRAILGIRNGHPLMTRVTGLGCTASALCGAFAAVNSSFTLAAAQAMAVMGIAGEMAAEISPGPGSLQLHFLDILYRLTEEDIARRLRIVAGE</sequence>